<accession>Q864G4</accession>
<evidence type="ECO:0000250" key="1">
    <source>
        <dbReference type="UniProtKB" id="Q01726"/>
    </source>
</evidence>
<evidence type="ECO:0000255" key="2"/>
<evidence type="ECO:0000255" key="3">
    <source>
        <dbReference type="PROSITE-ProRule" id="PRU00521"/>
    </source>
</evidence>
<name>MSHR_ALOSA</name>
<keyword id="KW-1003">Cell membrane</keyword>
<keyword id="KW-0297">G-protein coupled receptor</keyword>
<keyword id="KW-0325">Glycoprotein</keyword>
<keyword id="KW-0449">Lipoprotein</keyword>
<keyword id="KW-0472">Membrane</keyword>
<keyword id="KW-0564">Palmitate</keyword>
<keyword id="KW-0675">Receptor</keyword>
<keyword id="KW-0807">Transducer</keyword>
<keyword id="KW-0812">Transmembrane</keyword>
<keyword id="KW-1133">Transmembrane helix</keyword>
<gene>
    <name type="primary">MC1R</name>
</gene>
<dbReference type="EMBL" id="AY205133">
    <property type="protein sequence ID" value="AAP31007.1"/>
    <property type="molecule type" value="Genomic_DNA"/>
</dbReference>
<dbReference type="SMR" id="Q864G4"/>
<dbReference type="GlyCosmos" id="Q864G4">
    <property type="glycosylation" value="1 site, No reported glycans"/>
</dbReference>
<dbReference type="GO" id="GO:0005886">
    <property type="term" value="C:plasma membrane"/>
    <property type="evidence" value="ECO:0000250"/>
    <property type="project" value="UniProtKB"/>
</dbReference>
<dbReference type="GO" id="GO:0004980">
    <property type="term" value="F:melanocyte-stimulating hormone receptor activity"/>
    <property type="evidence" value="ECO:0007669"/>
    <property type="project" value="InterPro"/>
</dbReference>
<dbReference type="GO" id="GO:0007189">
    <property type="term" value="P:adenylate cyclase-activating G protein-coupled receptor signaling pathway"/>
    <property type="evidence" value="ECO:0007669"/>
    <property type="project" value="UniProtKB-ARBA"/>
</dbReference>
<dbReference type="FunFam" id="1.20.1070.10:FF:000211">
    <property type="entry name" value="Melanocyte-stimulating hormone receptor"/>
    <property type="match status" value="1"/>
</dbReference>
<dbReference type="Gene3D" id="1.20.1070.10">
    <property type="entry name" value="Rhodopsin 7-helix transmembrane proteins"/>
    <property type="match status" value="1"/>
</dbReference>
<dbReference type="InterPro" id="IPR000276">
    <property type="entry name" value="GPCR_Rhodpsn"/>
</dbReference>
<dbReference type="InterPro" id="IPR017452">
    <property type="entry name" value="GPCR_Rhodpsn_7TM"/>
</dbReference>
<dbReference type="InterPro" id="IPR001671">
    <property type="entry name" value="Melcrt_ACTH_rcpt"/>
</dbReference>
<dbReference type="InterPro" id="IPR000761">
    <property type="entry name" value="MSH_rcpt"/>
</dbReference>
<dbReference type="PANTHER" id="PTHR22750">
    <property type="entry name" value="G-PROTEIN COUPLED RECEPTOR"/>
    <property type="match status" value="1"/>
</dbReference>
<dbReference type="Pfam" id="PF00001">
    <property type="entry name" value="7tm_1"/>
    <property type="match status" value="2"/>
</dbReference>
<dbReference type="PRINTS" id="PR00237">
    <property type="entry name" value="GPCRRHODOPSN"/>
</dbReference>
<dbReference type="PRINTS" id="PR00534">
    <property type="entry name" value="MCRFAMILY"/>
</dbReference>
<dbReference type="PRINTS" id="PR00536">
    <property type="entry name" value="MELNOCYTESHR"/>
</dbReference>
<dbReference type="SMART" id="SM01381">
    <property type="entry name" value="7TM_GPCR_Srsx"/>
    <property type="match status" value="1"/>
</dbReference>
<dbReference type="SUPFAM" id="SSF81321">
    <property type="entry name" value="Family A G protein-coupled receptor-like"/>
    <property type="match status" value="1"/>
</dbReference>
<dbReference type="PROSITE" id="PS00237">
    <property type="entry name" value="G_PROTEIN_RECEP_F1_1"/>
    <property type="match status" value="1"/>
</dbReference>
<dbReference type="PROSITE" id="PS50262">
    <property type="entry name" value="G_PROTEIN_RECEP_F1_2"/>
    <property type="match status" value="1"/>
</dbReference>
<reference key="1">
    <citation type="journal article" date="2003" name="Am. J. Phys. Anthropol.">
        <title>Evolution of a pigmentation gene, the melanocortin-1 receptor, in primates.</title>
        <authorList>
            <person name="Mundy N.I."/>
            <person name="Kelly J."/>
        </authorList>
    </citation>
    <scope>NUCLEOTIDE SEQUENCE [GENOMIC DNA]</scope>
    <source>
        <strain>Isolate 449</strain>
    </source>
</reference>
<sequence length="317" mass="34687">MPMQGAQRRLLGSLNSTPTATPNLGLAANHTGAPCLEVSIPDGLFLSLGLVSLVENVLVVAAIAKNRNLHSPMYCFICCLALSDLLVSGSNMLEMAVILLLEAGALATRASVVQQLQNTIDVLTCSSMLCSLCFLGAIAVDRYVSIFYALRYHSIVTLPRARRAIAAIWVASVLSSTLFIAYCDHAAVLLCLVVFFLAMLVLMAVLYVHMLARACQHAQGITRLHKRQLPAHQGFGLRGAATLTILLGIFFVCWGPFFLHLMLVVLCPQHLTCSCIFKNFKVFLTLIICNTIIDPLIYAFRSQELCRTLKEVLLCSW</sequence>
<comment type="function">
    <text evidence="1">Receptor for MSH (alpha, beta and gamma) and ACTH. The activity of this receptor is mediated by G proteins which activate adenylate cyclase. Mediates melanogenesis, the production of eumelanin (black/brown) and phaeomelanin (red/yellow), via regulation of cAMP signaling in melanocytes.</text>
</comment>
<comment type="subunit">
    <text evidence="1">Interacts with MGRN1, but does not undergo MGRN1-mediated ubiquitination; this interaction competes with GNAS-binding and thus inhibits agonist-induced cAMP production. Interacts with OPN3; the interaction results in a decrease in MC1R-mediated cAMP signaling and ultimately a decrease in melanin production in melanocytes.</text>
</comment>
<comment type="subcellular location">
    <subcellularLocation>
        <location evidence="1">Cell membrane</location>
        <topology evidence="2">Multi-pass membrane protein</topology>
    </subcellularLocation>
</comment>
<comment type="similarity">
    <text evidence="3">Belongs to the G-protein coupled receptor 1 family.</text>
</comment>
<proteinExistence type="inferred from homology"/>
<protein>
    <recommendedName>
        <fullName>Melanocyte-stimulating hormone receptor</fullName>
        <shortName>MSH-R</shortName>
    </recommendedName>
    <alternativeName>
        <fullName>Melanocortin receptor 1</fullName>
        <shortName>MC1-R</shortName>
    </alternativeName>
</protein>
<organism>
    <name type="scientific">Alouatta sara</name>
    <name type="common">Bolivian red howler monkey</name>
    <dbReference type="NCBI Taxonomy" id="121123"/>
    <lineage>
        <taxon>Eukaryota</taxon>
        <taxon>Metazoa</taxon>
        <taxon>Chordata</taxon>
        <taxon>Craniata</taxon>
        <taxon>Vertebrata</taxon>
        <taxon>Euteleostomi</taxon>
        <taxon>Mammalia</taxon>
        <taxon>Eutheria</taxon>
        <taxon>Euarchontoglires</taxon>
        <taxon>Primates</taxon>
        <taxon>Haplorrhini</taxon>
        <taxon>Platyrrhini</taxon>
        <taxon>Atelidae</taxon>
        <taxon>Alouattinae</taxon>
        <taxon>Alouatta</taxon>
    </lineage>
</organism>
<feature type="chain" id="PRO_0000069790" description="Melanocyte-stimulating hormone receptor">
    <location>
        <begin position="1"/>
        <end position="317"/>
    </location>
</feature>
<feature type="topological domain" description="Extracellular" evidence="2">
    <location>
        <begin position="1"/>
        <end position="37"/>
    </location>
</feature>
<feature type="transmembrane region" description="Helical; Name=1" evidence="2">
    <location>
        <begin position="38"/>
        <end position="63"/>
    </location>
</feature>
<feature type="topological domain" description="Cytoplasmic" evidence="2">
    <location>
        <begin position="64"/>
        <end position="72"/>
    </location>
</feature>
<feature type="transmembrane region" description="Helical; Name=2" evidence="2">
    <location>
        <begin position="73"/>
        <end position="93"/>
    </location>
</feature>
<feature type="topological domain" description="Extracellular" evidence="2">
    <location>
        <begin position="94"/>
        <end position="118"/>
    </location>
</feature>
<feature type="transmembrane region" description="Helical; Name=3" evidence="2">
    <location>
        <begin position="119"/>
        <end position="140"/>
    </location>
</feature>
<feature type="topological domain" description="Cytoplasmic" evidence="2">
    <location>
        <begin position="141"/>
        <end position="163"/>
    </location>
</feature>
<feature type="transmembrane region" description="Helical; Name=4" evidence="2">
    <location>
        <begin position="164"/>
        <end position="183"/>
    </location>
</feature>
<feature type="topological domain" description="Extracellular" evidence="2">
    <location>
        <begin position="184"/>
        <end position="191"/>
    </location>
</feature>
<feature type="transmembrane region" description="Helical; Name=5" evidence="2">
    <location>
        <begin position="192"/>
        <end position="211"/>
    </location>
</feature>
<feature type="topological domain" description="Cytoplasmic" evidence="2">
    <location>
        <begin position="212"/>
        <end position="240"/>
    </location>
</feature>
<feature type="transmembrane region" description="Helical; Name=6" evidence="2">
    <location>
        <begin position="241"/>
        <end position="266"/>
    </location>
</feature>
<feature type="topological domain" description="Extracellular" evidence="2">
    <location>
        <begin position="267"/>
        <end position="279"/>
    </location>
</feature>
<feature type="transmembrane region" description="Helical; Name=7" evidence="2">
    <location>
        <begin position="280"/>
        <end position="300"/>
    </location>
</feature>
<feature type="topological domain" description="Cytoplasmic" evidence="2">
    <location>
        <begin position="301"/>
        <end position="317"/>
    </location>
</feature>
<feature type="lipid moiety-binding region" description="S-palmitoyl cysteine" evidence="2">
    <location>
        <position position="315"/>
    </location>
</feature>
<feature type="glycosylation site" description="N-linked (GlcNAc...) asparagine" evidence="2">
    <location>
        <position position="29"/>
    </location>
</feature>